<feature type="chain" id="PRO_1000196158" description="Large ribosomal subunit protein bL36">
    <location>
        <begin position="1"/>
        <end position="38"/>
    </location>
</feature>
<proteinExistence type="inferred from homology"/>
<accession>B8J883</accession>
<protein>
    <recommendedName>
        <fullName evidence="1">Large ribosomal subunit protein bL36</fullName>
    </recommendedName>
    <alternativeName>
        <fullName evidence="2">50S ribosomal protein L36</fullName>
    </alternativeName>
</protein>
<name>RL36_ANAD2</name>
<evidence type="ECO:0000255" key="1">
    <source>
        <dbReference type="HAMAP-Rule" id="MF_00251"/>
    </source>
</evidence>
<evidence type="ECO:0000305" key="2"/>
<gene>
    <name evidence="1" type="primary">rpmJ</name>
    <name type="ordered locus">A2cp1_2041</name>
</gene>
<dbReference type="EMBL" id="CP001359">
    <property type="protein sequence ID" value="ACL65382.1"/>
    <property type="molecule type" value="Genomic_DNA"/>
</dbReference>
<dbReference type="RefSeq" id="WP_011420977.1">
    <property type="nucleotide sequence ID" value="NC_011891.1"/>
</dbReference>
<dbReference type="SMR" id="B8J883"/>
<dbReference type="KEGG" id="acp:A2cp1_2041"/>
<dbReference type="HOGENOM" id="CLU_135723_6_2_7"/>
<dbReference type="Proteomes" id="UP000007089">
    <property type="component" value="Chromosome"/>
</dbReference>
<dbReference type="GO" id="GO:0005737">
    <property type="term" value="C:cytoplasm"/>
    <property type="evidence" value="ECO:0007669"/>
    <property type="project" value="UniProtKB-ARBA"/>
</dbReference>
<dbReference type="GO" id="GO:1990904">
    <property type="term" value="C:ribonucleoprotein complex"/>
    <property type="evidence" value="ECO:0007669"/>
    <property type="project" value="UniProtKB-KW"/>
</dbReference>
<dbReference type="GO" id="GO:0005840">
    <property type="term" value="C:ribosome"/>
    <property type="evidence" value="ECO:0007669"/>
    <property type="project" value="UniProtKB-KW"/>
</dbReference>
<dbReference type="GO" id="GO:0003735">
    <property type="term" value="F:structural constituent of ribosome"/>
    <property type="evidence" value="ECO:0007669"/>
    <property type="project" value="InterPro"/>
</dbReference>
<dbReference type="GO" id="GO:0006412">
    <property type="term" value="P:translation"/>
    <property type="evidence" value="ECO:0007669"/>
    <property type="project" value="UniProtKB-UniRule"/>
</dbReference>
<dbReference type="HAMAP" id="MF_00251">
    <property type="entry name" value="Ribosomal_bL36"/>
    <property type="match status" value="1"/>
</dbReference>
<dbReference type="InterPro" id="IPR000473">
    <property type="entry name" value="Ribosomal_bL36"/>
</dbReference>
<dbReference type="InterPro" id="IPR035977">
    <property type="entry name" value="Ribosomal_bL36_sp"/>
</dbReference>
<dbReference type="NCBIfam" id="TIGR01022">
    <property type="entry name" value="rpmJ_bact"/>
    <property type="match status" value="1"/>
</dbReference>
<dbReference type="PANTHER" id="PTHR42888">
    <property type="entry name" value="50S RIBOSOMAL PROTEIN L36, CHLOROPLASTIC"/>
    <property type="match status" value="1"/>
</dbReference>
<dbReference type="PANTHER" id="PTHR42888:SF1">
    <property type="entry name" value="LARGE RIBOSOMAL SUBUNIT PROTEIN BL36C"/>
    <property type="match status" value="1"/>
</dbReference>
<dbReference type="Pfam" id="PF00444">
    <property type="entry name" value="Ribosomal_L36"/>
    <property type="match status" value="1"/>
</dbReference>
<dbReference type="SUPFAM" id="SSF57840">
    <property type="entry name" value="Ribosomal protein L36"/>
    <property type="match status" value="1"/>
</dbReference>
<dbReference type="PROSITE" id="PS00828">
    <property type="entry name" value="RIBOSOMAL_L36"/>
    <property type="match status" value="1"/>
</dbReference>
<keyword id="KW-0687">Ribonucleoprotein</keyword>
<keyword id="KW-0689">Ribosomal protein</keyword>
<sequence length="38" mass="4375">MKVRASVKKICDKCKVIKRKGTVRIICPANPRHKQRQG</sequence>
<organism>
    <name type="scientific">Anaeromyxobacter dehalogenans (strain 2CP-1 / ATCC BAA-258)</name>
    <dbReference type="NCBI Taxonomy" id="455488"/>
    <lineage>
        <taxon>Bacteria</taxon>
        <taxon>Pseudomonadati</taxon>
        <taxon>Myxococcota</taxon>
        <taxon>Myxococcia</taxon>
        <taxon>Myxococcales</taxon>
        <taxon>Cystobacterineae</taxon>
        <taxon>Anaeromyxobacteraceae</taxon>
        <taxon>Anaeromyxobacter</taxon>
    </lineage>
</organism>
<reference key="1">
    <citation type="submission" date="2009-01" db="EMBL/GenBank/DDBJ databases">
        <title>Complete sequence of Anaeromyxobacter dehalogenans 2CP-1.</title>
        <authorList>
            <person name="Lucas S."/>
            <person name="Copeland A."/>
            <person name="Lapidus A."/>
            <person name="Glavina del Rio T."/>
            <person name="Dalin E."/>
            <person name="Tice H."/>
            <person name="Bruce D."/>
            <person name="Goodwin L."/>
            <person name="Pitluck S."/>
            <person name="Saunders E."/>
            <person name="Brettin T."/>
            <person name="Detter J.C."/>
            <person name="Han C."/>
            <person name="Larimer F."/>
            <person name="Land M."/>
            <person name="Hauser L."/>
            <person name="Kyrpides N."/>
            <person name="Ovchinnikova G."/>
            <person name="Beliaev A.S."/>
            <person name="Richardson P."/>
        </authorList>
    </citation>
    <scope>NUCLEOTIDE SEQUENCE [LARGE SCALE GENOMIC DNA]</scope>
    <source>
        <strain>2CP-1 / ATCC BAA-258</strain>
    </source>
</reference>
<comment type="similarity">
    <text evidence="1">Belongs to the bacterial ribosomal protein bL36 family.</text>
</comment>